<gene>
    <name type="primary">yosI</name>
    <name type="ordered locus">BSU20110</name>
</gene>
<sequence length="44" mass="5007">MKMKYGLYCMGSLVNTYDDAIEAHNDAVYAQEESGVPHEVREIQ</sequence>
<reference key="1">
    <citation type="journal article" date="1997" name="Nature">
        <title>The complete genome sequence of the Gram-positive bacterium Bacillus subtilis.</title>
        <authorList>
            <person name="Kunst F."/>
            <person name="Ogasawara N."/>
            <person name="Moszer I."/>
            <person name="Albertini A.M."/>
            <person name="Alloni G."/>
            <person name="Azevedo V."/>
            <person name="Bertero M.G."/>
            <person name="Bessieres P."/>
            <person name="Bolotin A."/>
            <person name="Borchert S."/>
            <person name="Borriss R."/>
            <person name="Boursier L."/>
            <person name="Brans A."/>
            <person name="Braun M."/>
            <person name="Brignell S.C."/>
            <person name="Bron S."/>
            <person name="Brouillet S."/>
            <person name="Bruschi C.V."/>
            <person name="Caldwell B."/>
            <person name="Capuano V."/>
            <person name="Carter N.M."/>
            <person name="Choi S.-K."/>
            <person name="Codani J.-J."/>
            <person name="Connerton I.F."/>
            <person name="Cummings N.J."/>
            <person name="Daniel R.A."/>
            <person name="Denizot F."/>
            <person name="Devine K.M."/>
            <person name="Duesterhoeft A."/>
            <person name="Ehrlich S.D."/>
            <person name="Emmerson P.T."/>
            <person name="Entian K.-D."/>
            <person name="Errington J."/>
            <person name="Fabret C."/>
            <person name="Ferrari E."/>
            <person name="Foulger D."/>
            <person name="Fritz C."/>
            <person name="Fujita M."/>
            <person name="Fujita Y."/>
            <person name="Fuma S."/>
            <person name="Galizzi A."/>
            <person name="Galleron N."/>
            <person name="Ghim S.-Y."/>
            <person name="Glaser P."/>
            <person name="Goffeau A."/>
            <person name="Golightly E.J."/>
            <person name="Grandi G."/>
            <person name="Guiseppi G."/>
            <person name="Guy B.J."/>
            <person name="Haga K."/>
            <person name="Haiech J."/>
            <person name="Harwood C.R."/>
            <person name="Henaut A."/>
            <person name="Hilbert H."/>
            <person name="Holsappel S."/>
            <person name="Hosono S."/>
            <person name="Hullo M.-F."/>
            <person name="Itaya M."/>
            <person name="Jones L.-M."/>
            <person name="Joris B."/>
            <person name="Karamata D."/>
            <person name="Kasahara Y."/>
            <person name="Klaerr-Blanchard M."/>
            <person name="Klein C."/>
            <person name="Kobayashi Y."/>
            <person name="Koetter P."/>
            <person name="Koningstein G."/>
            <person name="Krogh S."/>
            <person name="Kumano M."/>
            <person name="Kurita K."/>
            <person name="Lapidus A."/>
            <person name="Lardinois S."/>
            <person name="Lauber J."/>
            <person name="Lazarevic V."/>
            <person name="Lee S.-M."/>
            <person name="Levine A."/>
            <person name="Liu H."/>
            <person name="Masuda S."/>
            <person name="Mauel C."/>
            <person name="Medigue C."/>
            <person name="Medina N."/>
            <person name="Mellado R.P."/>
            <person name="Mizuno M."/>
            <person name="Moestl D."/>
            <person name="Nakai S."/>
            <person name="Noback M."/>
            <person name="Noone D."/>
            <person name="O'Reilly M."/>
            <person name="Ogawa K."/>
            <person name="Ogiwara A."/>
            <person name="Oudega B."/>
            <person name="Park S.-H."/>
            <person name="Parro V."/>
            <person name="Pohl T.M."/>
            <person name="Portetelle D."/>
            <person name="Porwollik S."/>
            <person name="Prescott A.M."/>
            <person name="Presecan E."/>
            <person name="Pujic P."/>
            <person name="Purnelle B."/>
            <person name="Rapoport G."/>
            <person name="Rey M."/>
            <person name="Reynolds S."/>
            <person name="Rieger M."/>
            <person name="Rivolta C."/>
            <person name="Rocha E."/>
            <person name="Roche B."/>
            <person name="Rose M."/>
            <person name="Sadaie Y."/>
            <person name="Sato T."/>
            <person name="Scanlan E."/>
            <person name="Schleich S."/>
            <person name="Schroeter R."/>
            <person name="Scoffone F."/>
            <person name="Sekiguchi J."/>
            <person name="Sekowska A."/>
            <person name="Seror S.J."/>
            <person name="Serror P."/>
            <person name="Shin B.-S."/>
            <person name="Soldo B."/>
            <person name="Sorokin A."/>
            <person name="Tacconi E."/>
            <person name="Takagi T."/>
            <person name="Takahashi H."/>
            <person name="Takemaru K."/>
            <person name="Takeuchi M."/>
            <person name="Tamakoshi A."/>
            <person name="Tanaka T."/>
            <person name="Terpstra P."/>
            <person name="Tognoni A."/>
            <person name="Tosato V."/>
            <person name="Uchiyama S."/>
            <person name="Vandenbol M."/>
            <person name="Vannier F."/>
            <person name="Vassarotti A."/>
            <person name="Viari A."/>
            <person name="Wambutt R."/>
            <person name="Wedler E."/>
            <person name="Wedler H."/>
            <person name="Weitzenegger T."/>
            <person name="Winters P."/>
            <person name="Wipat A."/>
            <person name="Yamamoto H."/>
            <person name="Yamane K."/>
            <person name="Yasumoto K."/>
            <person name="Yata K."/>
            <person name="Yoshida K."/>
            <person name="Yoshikawa H.-F."/>
            <person name="Zumstein E."/>
            <person name="Yoshikawa H."/>
            <person name="Danchin A."/>
        </authorList>
    </citation>
    <scope>NUCLEOTIDE SEQUENCE [LARGE SCALE GENOMIC DNA]</scope>
    <source>
        <strain>168</strain>
    </source>
</reference>
<keyword id="KW-1185">Reference proteome</keyword>
<name>YOSI_BACSU</name>
<proteinExistence type="predicted"/>
<organism>
    <name type="scientific">Bacillus subtilis (strain 168)</name>
    <dbReference type="NCBI Taxonomy" id="224308"/>
    <lineage>
        <taxon>Bacteria</taxon>
        <taxon>Bacillati</taxon>
        <taxon>Bacillota</taxon>
        <taxon>Bacilli</taxon>
        <taxon>Bacillales</taxon>
        <taxon>Bacillaceae</taxon>
        <taxon>Bacillus</taxon>
    </lineage>
</organism>
<accession>O31880</accession>
<dbReference type="EMBL" id="AL009126">
    <property type="protein sequence ID" value="CAB13903.1"/>
    <property type="molecule type" value="Genomic_DNA"/>
</dbReference>
<dbReference type="RefSeq" id="NP_389893.1">
    <property type="nucleotide sequence ID" value="NC_000964.3"/>
</dbReference>
<dbReference type="RefSeq" id="WP_004399476.1">
    <property type="nucleotide sequence ID" value="NZ_OZ025638.1"/>
</dbReference>
<dbReference type="SMR" id="O31880"/>
<dbReference type="FunCoup" id="O31880">
    <property type="interactions" value="45"/>
</dbReference>
<dbReference type="STRING" id="224308.BSU20110"/>
<dbReference type="PaxDb" id="224308-BSU20110"/>
<dbReference type="EnsemblBacteria" id="CAB13903">
    <property type="protein sequence ID" value="CAB13903"/>
    <property type="gene ID" value="BSU_20110"/>
</dbReference>
<dbReference type="GeneID" id="939563"/>
<dbReference type="KEGG" id="bsu:BSU20110"/>
<dbReference type="PATRIC" id="fig|224308.179.peg.2201"/>
<dbReference type="InParanoid" id="O31880"/>
<dbReference type="OrthoDB" id="2892336at2"/>
<dbReference type="BioCyc" id="BSUB:BSU20110-MONOMER"/>
<dbReference type="Proteomes" id="UP000001570">
    <property type="component" value="Chromosome"/>
</dbReference>
<feature type="chain" id="PRO_0000369129" description="SPbeta prophage-derived uncharacterized protein YosI">
    <location>
        <begin position="1"/>
        <end position="44"/>
    </location>
</feature>
<protein>
    <recommendedName>
        <fullName>SPbeta prophage-derived uncharacterized protein YosI</fullName>
    </recommendedName>
</protein>